<dbReference type="EC" id="2.7.4.22" evidence="1"/>
<dbReference type="EMBL" id="AE014295">
    <property type="protein sequence ID" value="AAN25300.1"/>
    <property type="molecule type" value="Genomic_DNA"/>
</dbReference>
<dbReference type="RefSeq" id="NP_696664.1">
    <property type="nucleotide sequence ID" value="NC_004307.2"/>
</dbReference>
<dbReference type="RefSeq" id="WP_007052755.1">
    <property type="nucleotide sequence ID" value="NC_004307.2"/>
</dbReference>
<dbReference type="SMR" id="Q8G484"/>
<dbReference type="STRING" id="206672.BL1505"/>
<dbReference type="EnsemblBacteria" id="AAN25300">
    <property type="protein sequence ID" value="AAN25300"/>
    <property type="gene ID" value="BL1505"/>
</dbReference>
<dbReference type="GeneID" id="69578355"/>
<dbReference type="KEGG" id="blo:BL1505"/>
<dbReference type="PATRIC" id="fig|206672.9.peg.377"/>
<dbReference type="HOGENOM" id="CLU_033861_0_0_11"/>
<dbReference type="OrthoDB" id="9807458at2"/>
<dbReference type="PhylomeDB" id="Q8G484"/>
<dbReference type="UniPathway" id="UPA00159">
    <property type="reaction ID" value="UER00275"/>
</dbReference>
<dbReference type="Proteomes" id="UP000000439">
    <property type="component" value="Chromosome"/>
</dbReference>
<dbReference type="GO" id="GO:0005737">
    <property type="term" value="C:cytoplasm"/>
    <property type="evidence" value="ECO:0007669"/>
    <property type="project" value="UniProtKB-SubCell"/>
</dbReference>
<dbReference type="GO" id="GO:0005524">
    <property type="term" value="F:ATP binding"/>
    <property type="evidence" value="ECO:0007669"/>
    <property type="project" value="UniProtKB-KW"/>
</dbReference>
<dbReference type="GO" id="GO:0033862">
    <property type="term" value="F:UMP kinase activity"/>
    <property type="evidence" value="ECO:0007669"/>
    <property type="project" value="UniProtKB-EC"/>
</dbReference>
<dbReference type="GO" id="GO:0044210">
    <property type="term" value="P:'de novo' CTP biosynthetic process"/>
    <property type="evidence" value="ECO:0007669"/>
    <property type="project" value="UniProtKB-UniRule"/>
</dbReference>
<dbReference type="GO" id="GO:0006225">
    <property type="term" value="P:UDP biosynthetic process"/>
    <property type="evidence" value="ECO:0007669"/>
    <property type="project" value="TreeGrafter"/>
</dbReference>
<dbReference type="CDD" id="cd04254">
    <property type="entry name" value="AAK_UMPK-PyrH-Ec"/>
    <property type="match status" value="1"/>
</dbReference>
<dbReference type="FunFam" id="3.40.1160.10:FF:000001">
    <property type="entry name" value="Uridylate kinase"/>
    <property type="match status" value="1"/>
</dbReference>
<dbReference type="Gene3D" id="3.40.1160.10">
    <property type="entry name" value="Acetylglutamate kinase-like"/>
    <property type="match status" value="1"/>
</dbReference>
<dbReference type="HAMAP" id="MF_01220_B">
    <property type="entry name" value="PyrH_B"/>
    <property type="match status" value="1"/>
</dbReference>
<dbReference type="InterPro" id="IPR036393">
    <property type="entry name" value="AceGlu_kinase-like_sf"/>
</dbReference>
<dbReference type="InterPro" id="IPR001048">
    <property type="entry name" value="Asp/Glu/Uridylate_kinase"/>
</dbReference>
<dbReference type="InterPro" id="IPR011817">
    <property type="entry name" value="Uridylate_kinase"/>
</dbReference>
<dbReference type="InterPro" id="IPR015963">
    <property type="entry name" value="Uridylate_kinase_bac"/>
</dbReference>
<dbReference type="NCBIfam" id="TIGR02075">
    <property type="entry name" value="pyrH_bact"/>
    <property type="match status" value="1"/>
</dbReference>
<dbReference type="PANTHER" id="PTHR42833">
    <property type="entry name" value="URIDYLATE KINASE"/>
    <property type="match status" value="1"/>
</dbReference>
<dbReference type="PANTHER" id="PTHR42833:SF4">
    <property type="entry name" value="URIDYLATE KINASE PUMPKIN, CHLOROPLASTIC"/>
    <property type="match status" value="1"/>
</dbReference>
<dbReference type="Pfam" id="PF00696">
    <property type="entry name" value="AA_kinase"/>
    <property type="match status" value="1"/>
</dbReference>
<dbReference type="PIRSF" id="PIRSF005650">
    <property type="entry name" value="Uridylate_kin"/>
    <property type="match status" value="1"/>
</dbReference>
<dbReference type="SUPFAM" id="SSF53633">
    <property type="entry name" value="Carbamate kinase-like"/>
    <property type="match status" value="1"/>
</dbReference>
<organism>
    <name type="scientific">Bifidobacterium longum (strain NCC 2705)</name>
    <dbReference type="NCBI Taxonomy" id="206672"/>
    <lineage>
        <taxon>Bacteria</taxon>
        <taxon>Bacillati</taxon>
        <taxon>Actinomycetota</taxon>
        <taxon>Actinomycetes</taxon>
        <taxon>Bifidobacteriales</taxon>
        <taxon>Bifidobacteriaceae</taxon>
        <taxon>Bifidobacterium</taxon>
    </lineage>
</organism>
<reference key="1">
    <citation type="journal article" date="2002" name="Proc. Natl. Acad. Sci. U.S.A.">
        <title>The genome sequence of Bifidobacterium longum reflects its adaptation to the human gastrointestinal tract.</title>
        <authorList>
            <person name="Schell M.A."/>
            <person name="Karmirantzou M."/>
            <person name="Snel B."/>
            <person name="Vilanova D."/>
            <person name="Berger B."/>
            <person name="Pessi G."/>
            <person name="Zwahlen M.-C."/>
            <person name="Desiere F."/>
            <person name="Bork P."/>
            <person name="Delley M."/>
            <person name="Pridmore R.D."/>
            <person name="Arigoni F."/>
        </authorList>
    </citation>
    <scope>NUCLEOTIDE SEQUENCE [LARGE SCALE GENOMIC DNA]</scope>
    <source>
        <strain>NCC 2705</strain>
    </source>
</reference>
<sequence>MTDSDNPRRVLLKLSGEAFGGGKVGIDTQVIRRIAEEIVPAVQQGVQVAIVVGGGNFFRGAELQQAGIDRSRGDYMGMLGTVMNCLALQDFLEQEGQATRVQTAITMGQVAEPYIPLKAIRHLEKGRVVIFGAGAGMPYFSTDTVSIQRSLEIHCDEVLMGKNGVDGVYTADPRKDENAKRFETLSYNRALVDNLAVMDASALSMARDNKKRIRVFGLEEPGNVTRALVGDEIGTLVSTAESRVAE</sequence>
<proteinExistence type="inferred from homology"/>
<evidence type="ECO:0000255" key="1">
    <source>
        <dbReference type="HAMAP-Rule" id="MF_01220"/>
    </source>
</evidence>
<keyword id="KW-0067">ATP-binding</keyword>
<keyword id="KW-0963">Cytoplasm</keyword>
<keyword id="KW-0418">Kinase</keyword>
<keyword id="KW-0547">Nucleotide-binding</keyword>
<keyword id="KW-0665">Pyrimidine biosynthesis</keyword>
<keyword id="KW-1185">Reference proteome</keyword>
<keyword id="KW-0808">Transferase</keyword>
<protein>
    <recommendedName>
        <fullName evidence="1">Uridylate kinase</fullName>
        <shortName evidence="1">UK</shortName>
        <ecNumber evidence="1">2.7.4.22</ecNumber>
    </recommendedName>
    <alternativeName>
        <fullName evidence="1">Uridine monophosphate kinase</fullName>
        <shortName evidence="1">UMP kinase</shortName>
        <shortName evidence="1">UMPK</shortName>
    </alternativeName>
</protein>
<comment type="function">
    <text evidence="1">Catalyzes the reversible phosphorylation of UMP to UDP.</text>
</comment>
<comment type="catalytic activity">
    <reaction evidence="1">
        <text>UMP + ATP = UDP + ADP</text>
        <dbReference type="Rhea" id="RHEA:24400"/>
        <dbReference type="ChEBI" id="CHEBI:30616"/>
        <dbReference type="ChEBI" id="CHEBI:57865"/>
        <dbReference type="ChEBI" id="CHEBI:58223"/>
        <dbReference type="ChEBI" id="CHEBI:456216"/>
        <dbReference type="EC" id="2.7.4.22"/>
    </reaction>
</comment>
<comment type="activity regulation">
    <text evidence="1">Inhibited by UTP.</text>
</comment>
<comment type="pathway">
    <text evidence="1">Pyrimidine metabolism; CTP biosynthesis via de novo pathway; UDP from UMP (UMPK route): step 1/1.</text>
</comment>
<comment type="subunit">
    <text evidence="1">Homohexamer.</text>
</comment>
<comment type="subcellular location">
    <subcellularLocation>
        <location evidence="1">Cytoplasm</location>
    </subcellularLocation>
</comment>
<comment type="similarity">
    <text evidence="1">Belongs to the UMP kinase family.</text>
</comment>
<accession>Q8G484</accession>
<name>PYRH_BIFLO</name>
<gene>
    <name evidence="1" type="primary">pyrH</name>
    <name type="ordered locus">BL1505</name>
</gene>
<feature type="chain" id="PRO_0000323794" description="Uridylate kinase">
    <location>
        <begin position="1"/>
        <end position="246"/>
    </location>
</feature>
<feature type="binding site" evidence="1">
    <location>
        <begin position="13"/>
        <end position="16"/>
    </location>
    <ligand>
        <name>ATP</name>
        <dbReference type="ChEBI" id="CHEBI:30616"/>
    </ligand>
</feature>
<feature type="binding site" evidence="1">
    <location>
        <position position="54"/>
    </location>
    <ligand>
        <name>UMP</name>
        <dbReference type="ChEBI" id="CHEBI:57865"/>
    </ligand>
</feature>
<feature type="binding site" evidence="1">
    <location>
        <position position="55"/>
    </location>
    <ligand>
        <name>ATP</name>
        <dbReference type="ChEBI" id="CHEBI:30616"/>
    </ligand>
</feature>
<feature type="binding site" evidence="1">
    <location>
        <position position="59"/>
    </location>
    <ligand>
        <name>ATP</name>
        <dbReference type="ChEBI" id="CHEBI:30616"/>
    </ligand>
</feature>
<feature type="binding site" evidence="1">
    <location>
        <position position="74"/>
    </location>
    <ligand>
        <name>UMP</name>
        <dbReference type="ChEBI" id="CHEBI:57865"/>
    </ligand>
</feature>
<feature type="binding site" evidence="1">
    <location>
        <begin position="135"/>
        <end position="142"/>
    </location>
    <ligand>
        <name>UMP</name>
        <dbReference type="ChEBI" id="CHEBI:57865"/>
    </ligand>
</feature>
<feature type="binding site" evidence="1">
    <location>
        <position position="163"/>
    </location>
    <ligand>
        <name>ATP</name>
        <dbReference type="ChEBI" id="CHEBI:30616"/>
    </ligand>
</feature>
<feature type="binding site" evidence="1">
    <location>
        <position position="169"/>
    </location>
    <ligand>
        <name>ATP</name>
        <dbReference type="ChEBI" id="CHEBI:30616"/>
    </ligand>
</feature>
<feature type="binding site" evidence="1">
    <location>
        <position position="172"/>
    </location>
    <ligand>
        <name>ATP</name>
        <dbReference type="ChEBI" id="CHEBI:30616"/>
    </ligand>
</feature>